<dbReference type="EC" id="2.3.2.27" evidence="18 20 21"/>
<dbReference type="EMBL" id="X80200">
    <property type="protein sequence ID" value="CAA56491.1"/>
    <property type="molecule type" value="mRNA"/>
</dbReference>
<dbReference type="EMBL" id="AF082185">
    <property type="protein sequence ID" value="AAC32376.1"/>
    <property type="molecule type" value="mRNA"/>
</dbReference>
<dbReference type="EMBL" id="AY937224">
    <property type="protein sequence ID" value="AAY16990.1"/>
    <property type="molecule type" value="mRNA"/>
</dbReference>
<dbReference type="EMBL" id="DQ323999">
    <property type="protein sequence ID" value="ABC40750.1"/>
    <property type="molecule type" value="Genomic_DNA"/>
</dbReference>
<dbReference type="EMBL" id="AC010761">
    <property type="status" value="NOT_ANNOTATED_CDS"/>
    <property type="molecule type" value="Genomic_DNA"/>
</dbReference>
<dbReference type="EMBL" id="BC001769">
    <property type="protein sequence ID" value="AAH01769.1"/>
    <property type="molecule type" value="mRNA"/>
</dbReference>
<dbReference type="CCDS" id="CCDS11243.1">
    <molecule id="Q9BUZ4-1"/>
</dbReference>
<dbReference type="PIR" id="I38026">
    <property type="entry name" value="I38026"/>
</dbReference>
<dbReference type="RefSeq" id="NP_004286.2">
    <molecule id="Q9BUZ4-1"/>
    <property type="nucleotide sequence ID" value="NM_004295.3"/>
</dbReference>
<dbReference type="PDB" id="2EOD">
    <property type="method" value="NMR"/>
    <property type="chains" value="A=190-248"/>
</dbReference>
<dbReference type="PDB" id="2YUC">
    <property type="method" value="NMR"/>
    <property type="chains" value="A=102-164"/>
</dbReference>
<dbReference type="PDB" id="3ZJB">
    <property type="method" value="X-ray"/>
    <property type="resolution" value="1.84 A"/>
    <property type="chains" value="A/B/C=283-470"/>
</dbReference>
<dbReference type="PDB" id="4K8U">
    <property type="method" value="X-ray"/>
    <property type="resolution" value="2.30 A"/>
    <property type="chains" value="A/B/C=281-470"/>
</dbReference>
<dbReference type="PDB" id="4M4E">
    <property type="method" value="X-ray"/>
    <property type="resolution" value="2.60 A"/>
    <property type="chains" value="A/B/C=292-466"/>
</dbReference>
<dbReference type="PDB" id="5YC1">
    <property type="method" value="X-ray"/>
    <property type="resolution" value="2.51 A"/>
    <property type="chains" value="A/B/C/D/E/F=290-470"/>
</dbReference>
<dbReference type="PDBsum" id="2EOD"/>
<dbReference type="PDBsum" id="2YUC"/>
<dbReference type="PDBsum" id="3ZJB"/>
<dbReference type="PDBsum" id="4K8U"/>
<dbReference type="PDBsum" id="4M4E"/>
<dbReference type="PDBsum" id="5YC1"/>
<dbReference type="PCDDB" id="Q9BUZ4"/>
<dbReference type="SMR" id="Q9BUZ4"/>
<dbReference type="BioGRID" id="114979">
    <property type="interactions" value="204"/>
</dbReference>
<dbReference type="DIP" id="DIP-40910N"/>
<dbReference type="FunCoup" id="Q9BUZ4">
    <property type="interactions" value="1633"/>
</dbReference>
<dbReference type="IntAct" id="Q9BUZ4">
    <property type="interactions" value="130"/>
</dbReference>
<dbReference type="MINT" id="Q9BUZ4"/>
<dbReference type="STRING" id="9606.ENSP00000262395"/>
<dbReference type="TCDB" id="8.A.133.1.11">
    <property type="family name" value="the siah1 e3 ubiquitin-protein ligase (siah1) family"/>
</dbReference>
<dbReference type="iPTMnet" id="Q9BUZ4"/>
<dbReference type="PhosphoSitePlus" id="Q9BUZ4"/>
<dbReference type="SwissPalm" id="Q9BUZ4"/>
<dbReference type="BioMuta" id="TRAF4"/>
<dbReference type="DMDM" id="30580636"/>
<dbReference type="jPOST" id="Q9BUZ4"/>
<dbReference type="MassIVE" id="Q9BUZ4"/>
<dbReference type="PaxDb" id="9606-ENSP00000262395"/>
<dbReference type="PeptideAtlas" id="Q9BUZ4"/>
<dbReference type="ProteomicsDB" id="79148">
    <molecule id="Q9BUZ4-1"/>
</dbReference>
<dbReference type="ProteomicsDB" id="79149">
    <molecule id="Q9BUZ4-2"/>
</dbReference>
<dbReference type="Pumba" id="Q9BUZ4"/>
<dbReference type="Antibodypedia" id="3961">
    <property type="antibodies" value="321 antibodies from 39 providers"/>
</dbReference>
<dbReference type="DNASU" id="9618"/>
<dbReference type="Ensembl" id="ENST00000262395.10">
    <molecule id="Q9BUZ4-1"/>
    <property type="protein sequence ID" value="ENSP00000262395.5"/>
    <property type="gene ID" value="ENSG00000076604.16"/>
</dbReference>
<dbReference type="GeneID" id="9618"/>
<dbReference type="KEGG" id="hsa:9618"/>
<dbReference type="MANE-Select" id="ENST00000262395.10">
    <property type="protein sequence ID" value="ENSP00000262395.5"/>
    <property type="RefSeq nucleotide sequence ID" value="NM_004295.4"/>
    <property type="RefSeq protein sequence ID" value="NP_004286.2"/>
</dbReference>
<dbReference type="UCSC" id="uc002hcq.2">
    <molecule id="Q9BUZ4-1"/>
    <property type="organism name" value="human"/>
</dbReference>
<dbReference type="AGR" id="HGNC:12034"/>
<dbReference type="CTD" id="9618"/>
<dbReference type="DisGeNET" id="9618"/>
<dbReference type="GeneCards" id="TRAF4"/>
<dbReference type="HGNC" id="HGNC:12034">
    <property type="gene designation" value="TRAF4"/>
</dbReference>
<dbReference type="HPA" id="ENSG00000076604">
    <property type="expression patterns" value="Low tissue specificity"/>
</dbReference>
<dbReference type="MIM" id="602464">
    <property type="type" value="gene"/>
</dbReference>
<dbReference type="neXtProt" id="NX_Q9BUZ4"/>
<dbReference type="OpenTargets" id="ENSG00000076604"/>
<dbReference type="PharmGKB" id="PA36711"/>
<dbReference type="VEuPathDB" id="HostDB:ENSG00000076604"/>
<dbReference type="eggNOG" id="KOG0297">
    <property type="taxonomic scope" value="Eukaryota"/>
</dbReference>
<dbReference type="GeneTree" id="ENSGT00940000158628"/>
<dbReference type="HOGENOM" id="CLU_021061_6_0_1"/>
<dbReference type="InParanoid" id="Q9BUZ4"/>
<dbReference type="OMA" id="CRWNGAL"/>
<dbReference type="OrthoDB" id="5574452at2759"/>
<dbReference type="PAN-GO" id="Q9BUZ4">
    <property type="GO annotations" value="3 GO annotations based on evolutionary models"/>
</dbReference>
<dbReference type="PhylomeDB" id="Q9BUZ4"/>
<dbReference type="TreeFam" id="TF321154"/>
<dbReference type="PathwayCommons" id="Q9BUZ4"/>
<dbReference type="SignaLink" id="Q9BUZ4"/>
<dbReference type="SIGNOR" id="Q9BUZ4"/>
<dbReference type="UniPathway" id="UPA00144"/>
<dbReference type="BioGRID-ORCS" id="9618">
    <property type="hits" value="19 hits in 1200 CRISPR screens"/>
</dbReference>
<dbReference type="ChiTaRS" id="TRAF4">
    <property type="organism name" value="human"/>
</dbReference>
<dbReference type="EvolutionaryTrace" id="Q9BUZ4"/>
<dbReference type="GeneWiki" id="TRAF4"/>
<dbReference type="GenomeRNAi" id="9618"/>
<dbReference type="Pharos" id="Q9BUZ4">
    <property type="development level" value="Tbio"/>
</dbReference>
<dbReference type="PRO" id="PR:Q9BUZ4"/>
<dbReference type="Proteomes" id="UP000005640">
    <property type="component" value="Chromosome 17"/>
</dbReference>
<dbReference type="RNAct" id="Q9BUZ4">
    <property type="molecule type" value="protein"/>
</dbReference>
<dbReference type="Bgee" id="ENSG00000076604">
    <property type="expression patterns" value="Expressed in olfactory segment of nasal mucosa and 188 other cell types or tissues"/>
</dbReference>
<dbReference type="ExpressionAtlas" id="Q9BUZ4">
    <property type="expression patterns" value="baseline and differential"/>
</dbReference>
<dbReference type="GO" id="GO:0005923">
    <property type="term" value="C:bicellular tight junction"/>
    <property type="evidence" value="ECO:0007669"/>
    <property type="project" value="UniProtKB-SubCell"/>
</dbReference>
<dbReference type="GO" id="GO:0005737">
    <property type="term" value="C:cytoplasm"/>
    <property type="evidence" value="ECO:0000314"/>
    <property type="project" value="UniProtKB"/>
</dbReference>
<dbReference type="GO" id="GO:0005856">
    <property type="term" value="C:cytoskeleton"/>
    <property type="evidence" value="ECO:0007669"/>
    <property type="project" value="UniProtKB-SubCell"/>
</dbReference>
<dbReference type="GO" id="GO:0005829">
    <property type="term" value="C:cytosol"/>
    <property type="evidence" value="ECO:0000314"/>
    <property type="project" value="HPA"/>
</dbReference>
<dbReference type="GO" id="GO:0001650">
    <property type="term" value="C:fibrillar center"/>
    <property type="evidence" value="ECO:0000314"/>
    <property type="project" value="HPA"/>
</dbReference>
<dbReference type="GO" id="GO:0005654">
    <property type="term" value="C:nucleoplasm"/>
    <property type="evidence" value="ECO:0000314"/>
    <property type="project" value="HPA"/>
</dbReference>
<dbReference type="GO" id="GO:0005634">
    <property type="term" value="C:nucleus"/>
    <property type="evidence" value="ECO:0000314"/>
    <property type="project" value="UniProtKB"/>
</dbReference>
<dbReference type="GO" id="GO:0048471">
    <property type="term" value="C:perinuclear region of cytoplasm"/>
    <property type="evidence" value="ECO:0007669"/>
    <property type="project" value="UniProtKB-SubCell"/>
</dbReference>
<dbReference type="GO" id="GO:0005886">
    <property type="term" value="C:plasma membrane"/>
    <property type="evidence" value="ECO:0007669"/>
    <property type="project" value="UniProtKB-SubCell"/>
</dbReference>
<dbReference type="GO" id="GO:0042802">
    <property type="term" value="F:identical protein binding"/>
    <property type="evidence" value="ECO:0000353"/>
    <property type="project" value="IntAct"/>
</dbReference>
<dbReference type="GO" id="GO:0019901">
    <property type="term" value="F:protein kinase binding"/>
    <property type="evidence" value="ECO:0007669"/>
    <property type="project" value="Ensembl"/>
</dbReference>
<dbReference type="GO" id="GO:0035591">
    <property type="term" value="F:signaling adaptor activity"/>
    <property type="evidence" value="ECO:0000318"/>
    <property type="project" value="GO_Central"/>
</dbReference>
<dbReference type="GO" id="GO:0031996">
    <property type="term" value="F:thioesterase binding"/>
    <property type="evidence" value="ECO:0000353"/>
    <property type="project" value="UniProtKB"/>
</dbReference>
<dbReference type="GO" id="GO:0016740">
    <property type="term" value="F:transferase activity"/>
    <property type="evidence" value="ECO:0007669"/>
    <property type="project" value="UniProtKB-KW"/>
</dbReference>
<dbReference type="GO" id="GO:0005164">
    <property type="term" value="F:tumor necrosis factor receptor binding"/>
    <property type="evidence" value="ECO:0000353"/>
    <property type="project" value="UniProtKB"/>
</dbReference>
<dbReference type="GO" id="GO:0031625">
    <property type="term" value="F:ubiquitin protein ligase binding"/>
    <property type="evidence" value="ECO:0000353"/>
    <property type="project" value="UniProtKB"/>
</dbReference>
<dbReference type="GO" id="GO:0050699">
    <property type="term" value="F:WW domain binding"/>
    <property type="evidence" value="ECO:0000353"/>
    <property type="project" value="UniProtKB"/>
</dbReference>
<dbReference type="GO" id="GO:0008270">
    <property type="term" value="F:zinc ion binding"/>
    <property type="evidence" value="ECO:0007669"/>
    <property type="project" value="UniProtKB-KW"/>
</dbReference>
<dbReference type="GO" id="GO:0006915">
    <property type="term" value="P:apoptotic process"/>
    <property type="evidence" value="ECO:0007669"/>
    <property type="project" value="UniProtKB-KW"/>
</dbReference>
<dbReference type="GO" id="GO:0007166">
    <property type="term" value="P:cell surface receptor signaling pathway"/>
    <property type="evidence" value="ECO:0000318"/>
    <property type="project" value="GO_Central"/>
</dbReference>
<dbReference type="GO" id="GO:0045087">
    <property type="term" value="P:innate immune response"/>
    <property type="evidence" value="ECO:0007669"/>
    <property type="project" value="UniProtKB-KW"/>
</dbReference>
<dbReference type="GO" id="GO:0046330">
    <property type="term" value="P:positive regulation of JNK cascade"/>
    <property type="evidence" value="ECO:0000314"/>
    <property type="project" value="UniProtKB"/>
</dbReference>
<dbReference type="GO" id="GO:0045860">
    <property type="term" value="P:positive regulation of protein kinase activity"/>
    <property type="evidence" value="ECO:0000314"/>
    <property type="project" value="UniProtKB"/>
</dbReference>
<dbReference type="GO" id="GO:0043161">
    <property type="term" value="P:proteasome-mediated ubiquitin-dependent protein catabolic process"/>
    <property type="evidence" value="ECO:0007669"/>
    <property type="project" value="UniProtKB-UniPathway"/>
</dbReference>
<dbReference type="GO" id="GO:0042981">
    <property type="term" value="P:regulation of apoptotic process"/>
    <property type="evidence" value="ECO:0007669"/>
    <property type="project" value="InterPro"/>
</dbReference>
<dbReference type="GO" id="GO:0043122">
    <property type="term" value="P:regulation of canonical NF-kappaB signal transduction"/>
    <property type="evidence" value="ECO:0000318"/>
    <property type="project" value="GO_Central"/>
</dbReference>
<dbReference type="GO" id="GO:0007585">
    <property type="term" value="P:respiratory gaseous exchange by respiratory system"/>
    <property type="evidence" value="ECO:0007669"/>
    <property type="project" value="Ensembl"/>
</dbReference>
<dbReference type="GO" id="GO:0030323">
    <property type="term" value="P:respiratory tube development"/>
    <property type="evidence" value="ECO:0007669"/>
    <property type="project" value="Ensembl"/>
</dbReference>
<dbReference type="CDD" id="cd03781">
    <property type="entry name" value="MATH_TRAF4"/>
    <property type="match status" value="1"/>
</dbReference>
<dbReference type="CDD" id="cd16641">
    <property type="entry name" value="mRING-HC-C3HC3D_TRAF4"/>
    <property type="match status" value="1"/>
</dbReference>
<dbReference type="FunFam" id="2.60.210.10:FF:000007">
    <property type="entry name" value="TNF receptor-associated factor"/>
    <property type="match status" value="1"/>
</dbReference>
<dbReference type="FunFam" id="3.30.40.10:FF:000381">
    <property type="entry name" value="TNF receptor-associated factor"/>
    <property type="match status" value="1"/>
</dbReference>
<dbReference type="FunFam" id="3.30.40.10:FF:000508">
    <property type="entry name" value="TNF receptor-associated factor"/>
    <property type="match status" value="1"/>
</dbReference>
<dbReference type="FunFam" id="3.30.40.10:FF:000610">
    <property type="entry name" value="TNF receptor-associated factor"/>
    <property type="match status" value="1"/>
</dbReference>
<dbReference type="FunFam" id="3.30.40.10:FF:000649">
    <property type="entry name" value="TNF receptor-associated factor"/>
    <property type="match status" value="1"/>
</dbReference>
<dbReference type="Gene3D" id="2.60.210.10">
    <property type="entry name" value="Apoptosis, Tumor Necrosis Factor Receptor Associated Protein 2, Chain A"/>
    <property type="match status" value="1"/>
</dbReference>
<dbReference type="Gene3D" id="3.30.40.10">
    <property type="entry name" value="Zinc/RING finger domain, C3HC4 (zinc finger)"/>
    <property type="match status" value="4"/>
</dbReference>
<dbReference type="InterPro" id="IPR002083">
    <property type="entry name" value="MATH/TRAF_dom"/>
</dbReference>
<dbReference type="InterPro" id="IPR012227">
    <property type="entry name" value="TNF_rcpt-assoc_TRAF_met"/>
</dbReference>
<dbReference type="InterPro" id="IPR008974">
    <property type="entry name" value="TRAF-like"/>
</dbReference>
<dbReference type="InterPro" id="IPR049342">
    <property type="entry name" value="TRAF1-6_MATH_dom"/>
</dbReference>
<dbReference type="InterPro" id="IPR037307">
    <property type="entry name" value="TRAF4_MATH"/>
</dbReference>
<dbReference type="InterPro" id="IPR018957">
    <property type="entry name" value="Znf_C3HC4_RING-type"/>
</dbReference>
<dbReference type="InterPro" id="IPR001841">
    <property type="entry name" value="Znf_RING"/>
</dbReference>
<dbReference type="InterPro" id="IPR013083">
    <property type="entry name" value="Znf_RING/FYVE/PHD"/>
</dbReference>
<dbReference type="InterPro" id="IPR017907">
    <property type="entry name" value="Znf_RING_CS"/>
</dbReference>
<dbReference type="InterPro" id="IPR001293">
    <property type="entry name" value="Znf_TRAF"/>
</dbReference>
<dbReference type="PANTHER" id="PTHR10131">
    <property type="entry name" value="TNF RECEPTOR ASSOCIATED FACTOR"/>
    <property type="match status" value="1"/>
</dbReference>
<dbReference type="PANTHER" id="PTHR10131:SF94">
    <property type="entry name" value="TNF RECEPTOR-ASSOCIATED FACTOR 4"/>
    <property type="match status" value="1"/>
</dbReference>
<dbReference type="Pfam" id="PF21355">
    <property type="entry name" value="TRAF-mep_MATH"/>
    <property type="match status" value="1"/>
</dbReference>
<dbReference type="Pfam" id="PF00097">
    <property type="entry name" value="zf-C3HC4"/>
    <property type="match status" value="1"/>
</dbReference>
<dbReference type="Pfam" id="PF02176">
    <property type="entry name" value="zf-TRAF"/>
    <property type="match status" value="2"/>
</dbReference>
<dbReference type="PIRSF" id="PIRSF015614">
    <property type="entry name" value="TRAF"/>
    <property type="match status" value="1"/>
</dbReference>
<dbReference type="SMART" id="SM00061">
    <property type="entry name" value="MATH"/>
    <property type="match status" value="1"/>
</dbReference>
<dbReference type="SMART" id="SM00184">
    <property type="entry name" value="RING"/>
    <property type="match status" value="1"/>
</dbReference>
<dbReference type="SUPFAM" id="SSF57850">
    <property type="entry name" value="RING/U-box"/>
    <property type="match status" value="1"/>
</dbReference>
<dbReference type="SUPFAM" id="SSF49599">
    <property type="entry name" value="TRAF domain-like"/>
    <property type="match status" value="3"/>
</dbReference>
<dbReference type="PROSITE" id="PS50144">
    <property type="entry name" value="MATH"/>
    <property type="match status" value="1"/>
</dbReference>
<dbReference type="PROSITE" id="PS00518">
    <property type="entry name" value="ZF_RING_1"/>
    <property type="match status" value="1"/>
</dbReference>
<dbReference type="PROSITE" id="PS50089">
    <property type="entry name" value="ZF_RING_2"/>
    <property type="match status" value="1"/>
</dbReference>
<dbReference type="PROSITE" id="PS50145">
    <property type="entry name" value="ZF_TRAF"/>
    <property type="match status" value="3"/>
</dbReference>
<feature type="chain" id="PRO_0000056403" description="TNF receptor-associated factor 4">
    <location>
        <begin position="1"/>
        <end position="470"/>
    </location>
</feature>
<feature type="domain" description="MATH" evidence="4">
    <location>
        <begin position="307"/>
        <end position="462"/>
    </location>
</feature>
<feature type="zinc finger region" description="RING-type" evidence="5">
    <location>
        <begin position="18"/>
        <end position="58"/>
    </location>
</feature>
<feature type="zinc finger region" description="TRAF-type 1" evidence="6">
    <location>
        <begin position="102"/>
        <end position="154"/>
    </location>
</feature>
<feature type="zinc finger region" description="TRAF-type 2" evidence="6">
    <location>
        <begin position="155"/>
        <end position="208"/>
    </location>
</feature>
<feature type="zinc finger region" description="TRAF-type 3" evidence="6">
    <location>
        <begin position="209"/>
        <end position="266"/>
    </location>
</feature>
<feature type="coiled-coil region" evidence="3">
    <location>
        <begin position="277"/>
        <end position="309"/>
    </location>
</feature>
<feature type="modified residue" description="Phosphoserine" evidence="30 31 32">
    <location>
        <position position="426"/>
    </location>
</feature>
<feature type="cross-link" description="Glycyl lysine isopeptide (Lys-Gly) (interchain with G-Cter in ubiquitin)" evidence="2">
    <location>
        <position position="263"/>
    </location>
</feature>
<feature type="splice variant" id="VSP_007403" description="In isoform 2." evidence="26 27">
    <location>
        <begin position="157"/>
        <end position="428"/>
    </location>
</feature>
<feature type="sequence variant" id="VAR_025805" description="In dbSNP:rs35932778." evidence="25">
    <original>A</original>
    <variation>T</variation>
    <location>
        <position position="173"/>
    </location>
</feature>
<feature type="sequence variant" id="VAR_052150" description="In dbSNP:rs1044066." evidence="22">
    <original>R</original>
    <variation>G</variation>
    <location>
        <position position="178"/>
    </location>
</feature>
<feature type="mutagenesis site" description="Complete loss of E3 ligase activity." evidence="20">
    <original>C</original>
    <variation>A</variation>
    <location>
        <position position="18"/>
    </location>
</feature>
<feature type="strand" evidence="34">
    <location>
        <begin position="123"/>
        <end position="126"/>
    </location>
</feature>
<feature type="turn" evidence="34">
    <location>
        <begin position="127"/>
        <end position="132"/>
    </location>
</feature>
<feature type="strand" evidence="34">
    <location>
        <begin position="142"/>
        <end position="144"/>
    </location>
</feature>
<feature type="helix" evidence="34">
    <location>
        <begin position="150"/>
        <end position="155"/>
    </location>
</feature>
<feature type="turn" evidence="34">
    <location>
        <begin position="156"/>
        <end position="158"/>
    </location>
</feature>
<feature type="strand" evidence="33">
    <location>
        <begin position="192"/>
        <end position="194"/>
    </location>
</feature>
<feature type="strand" evidence="33">
    <location>
        <begin position="196"/>
        <end position="198"/>
    </location>
</feature>
<feature type="strand" evidence="33">
    <location>
        <begin position="201"/>
        <end position="203"/>
    </location>
</feature>
<feature type="helix" evidence="33">
    <location>
        <begin position="204"/>
        <end position="213"/>
    </location>
</feature>
<feature type="strand" evidence="33">
    <location>
        <begin position="215"/>
        <end position="220"/>
    </location>
</feature>
<feature type="strand" evidence="33">
    <location>
        <begin position="229"/>
        <end position="231"/>
    </location>
</feature>
<feature type="turn" evidence="33">
    <location>
        <begin position="232"/>
        <end position="234"/>
    </location>
</feature>
<feature type="helix" evidence="33">
    <location>
        <begin position="235"/>
        <end position="240"/>
    </location>
</feature>
<feature type="strand" evidence="33">
    <location>
        <begin position="243"/>
        <end position="245"/>
    </location>
</feature>
<feature type="helix" evidence="35">
    <location>
        <begin position="286"/>
        <end position="301"/>
    </location>
</feature>
<feature type="strand" evidence="35">
    <location>
        <begin position="309"/>
        <end position="314"/>
    </location>
</feature>
<feature type="helix" evidence="35">
    <location>
        <begin position="317"/>
        <end position="326"/>
    </location>
</feature>
<feature type="strand" evidence="35">
    <location>
        <begin position="337"/>
        <end position="340"/>
    </location>
</feature>
<feature type="strand" evidence="35">
    <location>
        <begin position="345"/>
        <end position="351"/>
    </location>
</feature>
<feature type="helix" evidence="35">
    <location>
        <begin position="356"/>
        <end position="358"/>
    </location>
</feature>
<feature type="turn" evidence="35">
    <location>
        <begin position="359"/>
        <end position="361"/>
    </location>
</feature>
<feature type="strand" evidence="35">
    <location>
        <begin position="362"/>
        <end position="370"/>
    </location>
</feature>
<feature type="helix" evidence="35">
    <location>
        <begin position="375"/>
        <end position="377"/>
    </location>
</feature>
<feature type="strand" evidence="35">
    <location>
        <begin position="386"/>
        <end position="390"/>
    </location>
</feature>
<feature type="turn" evidence="35">
    <location>
        <begin position="396"/>
        <end position="398"/>
    </location>
</feature>
<feature type="strand" evidence="35">
    <location>
        <begin position="404"/>
        <end position="408"/>
    </location>
</feature>
<feature type="helix" evidence="35">
    <location>
        <begin position="415"/>
        <end position="417"/>
    </location>
</feature>
<feature type="helix" evidence="36">
    <location>
        <begin position="427"/>
        <end position="431"/>
    </location>
</feature>
<feature type="strand" evidence="35">
    <location>
        <begin position="434"/>
        <end position="441"/>
    </location>
</feature>
<feature type="helix" evidence="35">
    <location>
        <begin position="442"/>
        <end position="445"/>
    </location>
</feature>
<feature type="turn" evidence="35">
    <location>
        <begin position="446"/>
        <end position="450"/>
    </location>
</feature>
<feature type="strand" evidence="35">
    <location>
        <begin position="455"/>
        <end position="462"/>
    </location>
</feature>
<accession>Q9BUZ4</accession>
<accession>O75615</accession>
<accession>Q14848</accession>
<accession>Q2KJU4</accession>
<accession>Q2PJN8</accession>
<evidence type="ECO:0000250" key="1"/>
<evidence type="ECO:0000250" key="2">
    <source>
        <dbReference type="UniProtKB" id="Q61382"/>
    </source>
</evidence>
<evidence type="ECO:0000255" key="3"/>
<evidence type="ECO:0000255" key="4">
    <source>
        <dbReference type="PROSITE-ProRule" id="PRU00129"/>
    </source>
</evidence>
<evidence type="ECO:0000255" key="5">
    <source>
        <dbReference type="PROSITE-ProRule" id="PRU00175"/>
    </source>
</evidence>
<evidence type="ECO:0000255" key="6">
    <source>
        <dbReference type="PROSITE-ProRule" id="PRU00207"/>
    </source>
</evidence>
<evidence type="ECO:0000269" key="7">
    <source>
    </source>
</evidence>
<evidence type="ECO:0000269" key="8">
    <source>
    </source>
</evidence>
<evidence type="ECO:0000269" key="9">
    <source>
    </source>
</evidence>
<evidence type="ECO:0000269" key="10">
    <source>
    </source>
</evidence>
<evidence type="ECO:0000269" key="11">
    <source>
    </source>
</evidence>
<evidence type="ECO:0000269" key="12">
    <source>
    </source>
</evidence>
<evidence type="ECO:0000269" key="13">
    <source>
    </source>
</evidence>
<evidence type="ECO:0000269" key="14">
    <source>
    </source>
</evidence>
<evidence type="ECO:0000269" key="15">
    <source>
    </source>
</evidence>
<evidence type="ECO:0000269" key="16">
    <source>
    </source>
</evidence>
<evidence type="ECO:0000269" key="17">
    <source>
    </source>
</evidence>
<evidence type="ECO:0000269" key="18">
    <source>
    </source>
</evidence>
<evidence type="ECO:0000269" key="19">
    <source>
    </source>
</evidence>
<evidence type="ECO:0000269" key="20">
    <source>
    </source>
</evidence>
<evidence type="ECO:0000269" key="21">
    <source>
    </source>
</evidence>
<evidence type="ECO:0000269" key="22">
    <source>
    </source>
</evidence>
<evidence type="ECO:0000269" key="23">
    <source>
    </source>
</evidence>
<evidence type="ECO:0000269" key="24">
    <source>
    </source>
</evidence>
<evidence type="ECO:0000269" key="25">
    <source ref="4"/>
</evidence>
<evidence type="ECO:0000303" key="26">
    <source ref="2"/>
</evidence>
<evidence type="ECO:0000303" key="27">
    <source ref="3"/>
</evidence>
<evidence type="ECO:0000305" key="28"/>
<evidence type="ECO:0007744" key="29">
    <source>
        <dbReference type="PDB" id="5YC1"/>
    </source>
</evidence>
<evidence type="ECO:0007744" key="30">
    <source>
    </source>
</evidence>
<evidence type="ECO:0007744" key="31">
    <source>
    </source>
</evidence>
<evidence type="ECO:0007744" key="32">
    <source>
    </source>
</evidence>
<evidence type="ECO:0007829" key="33">
    <source>
        <dbReference type="PDB" id="2EOD"/>
    </source>
</evidence>
<evidence type="ECO:0007829" key="34">
    <source>
        <dbReference type="PDB" id="2YUC"/>
    </source>
</evidence>
<evidence type="ECO:0007829" key="35">
    <source>
        <dbReference type="PDB" id="3ZJB"/>
    </source>
</evidence>
<evidence type="ECO:0007829" key="36">
    <source>
        <dbReference type="PDB" id="4M4E"/>
    </source>
</evidence>
<protein>
    <recommendedName>
        <fullName>TNF receptor-associated factor 4</fullName>
        <ecNumber evidence="18 20 21">2.3.2.27</ecNumber>
    </recommendedName>
    <alternativeName>
        <fullName>Cysteine-rich domain associated with RING and Traf domains protein 1</fullName>
    </alternativeName>
    <alternativeName>
        <fullName>Metastatic lymph node gene 62 protein</fullName>
        <shortName>MLN 62</shortName>
    </alternativeName>
    <alternativeName>
        <fullName>RING finger protein 83</fullName>
    </alternativeName>
</protein>
<sequence>MPGFDYKFLEKPKRRLLCPLCGKPMREPVQVSTCGHRFCDTCLQEFLSEGVFKCPEDQLPLDYAKIYPDPELEVQVLGLPIRCIHSEEGCRWSGPLRHLQGHLNTCSFNVIPCPNRCPMKLSRRDLPAHLQHDCPKRRLKCEFCGCDFSGEAYESHEGMCPQESVYCENKCGARMMRRLLAQHATSECPKRTQPCTYCTKEFVFDTIQSHQYQCPRLPVACPNQCGVGTVAREDLPGHLKDSCNTALVLCPFKDSGCKHRCPKLAMARHVEESVKPHLAMMCALVSRQRQELQELRRELEELSVGSDGVLIWKIGSYGRRLQEAKAKPNLECFSPAFYTHKYGYKLQVSAFLNGNGSGEGTHLSLYIRVLPGAFDNLLEWPFARRVTFSLLDQSDPGLAKPQHVTETFHPDPNWKNFQKPGTWRGSLDESSLGFGYPKFISHQDIRKRNYVRDDAVFIRAAVELPRKILS</sequence>
<reference key="1">
    <citation type="journal article" date="1995" name="Genomics">
        <title>Identification of four novel human genes amplified and overexpressed in breast carcinoma and localized to the q11-q21.3 region of chromosome 17.</title>
        <authorList>
            <person name="Tomasetto C.L."/>
            <person name="Regnier C.H."/>
            <person name="Moog-Lutz C."/>
            <person name="Mattei M.-G."/>
            <person name="Chenard M.-P."/>
            <person name="Lidereau R."/>
            <person name="Basset P."/>
            <person name="Rio M.-C."/>
        </authorList>
    </citation>
    <scope>NUCLEOTIDE SEQUENCE [MRNA] (ISOFORM 1)</scope>
    <scope>VARIANT GLY-178</scope>
    <source>
        <tissue>Mammary tumor</tissue>
    </source>
</reference>
<reference key="2">
    <citation type="submission" date="1998-08" db="EMBL/GenBank/DDBJ databases">
        <title>TRAF4 expression in proliferating cells.</title>
        <authorList>
            <person name="Miller H.G."/>
            <person name="Pullen S.P."/>
            <person name="White H.E."/>
            <person name="Phipps R.P."/>
            <person name="Kehry M.R."/>
            <person name="Crute J.J."/>
        </authorList>
    </citation>
    <scope>NUCLEOTIDE SEQUENCE [MRNA] (ISOFORM 2)</scope>
    <source>
        <tissue>Lung</tissue>
    </source>
</reference>
<reference key="3">
    <citation type="submission" date="2005-02" db="EMBL/GenBank/DDBJ databases">
        <authorList>
            <person name="Cai C.L."/>
            <person name="Li R."/>
            <person name="Wang R.S."/>
            <person name="Miao S.Y."/>
            <person name="Wang L.F."/>
        </authorList>
    </citation>
    <scope>NUCLEOTIDE SEQUENCE [LARGE SCALE MRNA] (ISOFORM 2)</scope>
    <source>
        <tissue>Cervix carcinoma</tissue>
    </source>
</reference>
<reference key="4">
    <citation type="submission" date="2005-12" db="EMBL/GenBank/DDBJ databases">
        <authorList>
            <consortium name="NIEHS SNPs program"/>
        </authorList>
    </citation>
    <scope>NUCLEOTIDE SEQUENCE [GENOMIC DNA]</scope>
    <scope>VARIANT THR-173</scope>
</reference>
<reference key="5">
    <citation type="journal article" date="2006" name="Nature">
        <title>DNA sequence of human chromosome 17 and analysis of rearrangement in the human lineage.</title>
        <authorList>
            <person name="Zody M.C."/>
            <person name="Garber M."/>
            <person name="Adams D.J."/>
            <person name="Sharpe T."/>
            <person name="Harrow J."/>
            <person name="Lupski J.R."/>
            <person name="Nicholson C."/>
            <person name="Searle S.M."/>
            <person name="Wilming L."/>
            <person name="Young S.K."/>
            <person name="Abouelleil A."/>
            <person name="Allen N.R."/>
            <person name="Bi W."/>
            <person name="Bloom T."/>
            <person name="Borowsky M.L."/>
            <person name="Bugalter B.E."/>
            <person name="Butler J."/>
            <person name="Chang J.L."/>
            <person name="Chen C.-K."/>
            <person name="Cook A."/>
            <person name="Corum B."/>
            <person name="Cuomo C.A."/>
            <person name="de Jong P.J."/>
            <person name="DeCaprio D."/>
            <person name="Dewar K."/>
            <person name="FitzGerald M."/>
            <person name="Gilbert J."/>
            <person name="Gibson R."/>
            <person name="Gnerre S."/>
            <person name="Goldstein S."/>
            <person name="Grafham D.V."/>
            <person name="Grocock R."/>
            <person name="Hafez N."/>
            <person name="Hagopian D.S."/>
            <person name="Hart E."/>
            <person name="Norman C.H."/>
            <person name="Humphray S."/>
            <person name="Jaffe D.B."/>
            <person name="Jones M."/>
            <person name="Kamal M."/>
            <person name="Khodiyar V.K."/>
            <person name="LaButti K."/>
            <person name="Laird G."/>
            <person name="Lehoczky J."/>
            <person name="Liu X."/>
            <person name="Lokyitsang T."/>
            <person name="Loveland J."/>
            <person name="Lui A."/>
            <person name="Macdonald P."/>
            <person name="Major J.E."/>
            <person name="Matthews L."/>
            <person name="Mauceli E."/>
            <person name="McCarroll S.A."/>
            <person name="Mihalev A.H."/>
            <person name="Mudge J."/>
            <person name="Nguyen C."/>
            <person name="Nicol R."/>
            <person name="O'Leary S.B."/>
            <person name="Osoegawa K."/>
            <person name="Schwartz D.C."/>
            <person name="Shaw-Smith C."/>
            <person name="Stankiewicz P."/>
            <person name="Steward C."/>
            <person name="Swarbreck D."/>
            <person name="Venkataraman V."/>
            <person name="Whittaker C.A."/>
            <person name="Yang X."/>
            <person name="Zimmer A.R."/>
            <person name="Bradley A."/>
            <person name="Hubbard T."/>
            <person name="Birren B.W."/>
            <person name="Rogers J."/>
            <person name="Lander E.S."/>
            <person name="Nusbaum C."/>
        </authorList>
    </citation>
    <scope>NUCLEOTIDE SEQUENCE [LARGE SCALE GENOMIC DNA]</scope>
</reference>
<reference key="6">
    <citation type="journal article" date="2004" name="Genome Res.">
        <title>The status, quality, and expansion of the NIH full-length cDNA project: the Mammalian Gene Collection (MGC).</title>
        <authorList>
            <consortium name="The MGC Project Team"/>
        </authorList>
    </citation>
    <scope>NUCLEOTIDE SEQUENCE [LARGE SCALE MRNA] (ISOFORM 1)</scope>
    <source>
        <tissue>Retinoblastoma</tissue>
    </source>
</reference>
<reference key="7">
    <citation type="journal article" date="1995" name="J. Biol. Chem.">
        <title>Presence of a new conserved domain in CART1, a novel member of the tumor necrosis factor receptor-associated protein family, which is expressed in breast carcinoma.</title>
        <authorList>
            <person name="Regnier C.H."/>
            <person name="Tomasetto C."/>
            <person name="Moog-Lutz C."/>
            <person name="Chenard M.-P."/>
            <person name="Wendling C."/>
            <person name="Basset P."/>
            <person name="Rio M.-C."/>
        </authorList>
    </citation>
    <scope>SUBCELLULAR LOCATION</scope>
    <scope>TISSUE SPECIFICITY</scope>
</reference>
<reference key="8">
    <citation type="journal article" date="1998" name="Am. J. Pathol.">
        <title>TRAF-4 expression in epithelial progenitor cells. Analysis in normal adult, fetal, and tumor tissues.</title>
        <authorList>
            <person name="Krajewska M."/>
            <person name="Krajewski S."/>
            <person name="Zapata J.M."/>
            <person name="VanArsdale T."/>
            <person name="Gascoyne R.D."/>
            <person name="Berern K."/>
            <person name="McFadden D."/>
            <person name="Shabaik A."/>
            <person name="Hugh J."/>
            <person name="Reynolds A."/>
            <person name="Clevenger C.V."/>
            <person name="Reed J.C."/>
        </authorList>
    </citation>
    <scope>INTERACTION WITH LTBR AND TNFRSDF16</scope>
    <scope>SUBCELLULAR LOCATION</scope>
    <scope>TISSUE SPECIFICITY</scope>
</reference>
<reference key="9">
    <citation type="journal article" date="1999" name="J. Biol. Chem.">
        <title>TRAF family proteins interact with the common neurotrophin receptor and modulate apoptosis induction.</title>
        <authorList>
            <person name="Ye X."/>
            <person name="Mehlen P."/>
            <person name="Rabizadeh S."/>
            <person name="VanArsdale T."/>
            <person name="Zhang H."/>
            <person name="Shin H."/>
            <person name="Wang J.J.L."/>
            <person name="Leo E."/>
            <person name="Zapata J.M."/>
            <person name="Hauser C.A."/>
            <person name="Reed J.C."/>
            <person name="Bredesen D.E."/>
        </authorList>
    </citation>
    <scope>INTERACTION WITH TNFRSF16</scope>
</reference>
<reference key="10">
    <citation type="journal article" date="2002" name="J. Biol. Chem.">
        <title>Involvement of TRAF4 in oxidative activation of c-Jun N-terminal kinase.</title>
        <authorList>
            <person name="Xu Y.C."/>
            <person name="Wu R.F."/>
            <person name="Gu Y."/>
            <person name="Yang Y.S."/>
            <person name="Yang M.C."/>
            <person name="Nwariaku F.E."/>
            <person name="Terada L.S."/>
        </authorList>
    </citation>
    <scope>FUNCTION</scope>
    <scope>INTERACTION WITH NCF1</scope>
    <scope>SUBCELLULAR LOCATION</scope>
</reference>
<reference key="11">
    <citation type="journal article" date="2003" name="Leuk. Res.">
        <title>Tumor necrosis factor receptor-associated factor (TRAF) 4 is a new binding partner for the p70S6 serine/threonine kinase.</title>
        <authorList>
            <person name="Fleckenstein D.S."/>
            <person name="Dirks W.G."/>
            <person name="Drexler H.G."/>
            <person name="Quentmeier H."/>
        </authorList>
    </citation>
    <scope>FUNCTION</scope>
    <scope>INTERACTION WITH RPS6KB1</scope>
</reference>
<reference key="12">
    <citation type="journal article" date="2005" name="Eur. J. Immunol.">
        <title>TRAF4 acts as a silencer in TLR-mediated signaling through the association with TRAF6 and TRIF.</title>
        <authorList>
            <person name="Takeshita F."/>
            <person name="Ishii K.J."/>
            <person name="Kobiyama K."/>
            <person name="Kojima Y."/>
            <person name="Coban C."/>
            <person name="Sasaki S."/>
            <person name="Ishii N."/>
            <person name="Klinman D.M."/>
            <person name="Okuda K."/>
            <person name="Akira S."/>
            <person name="Suzuki K."/>
        </authorList>
    </citation>
    <scope>FUNCTION</scope>
    <scope>INTERACTION WITH NCF1; TICAM1; IRAK1 AND TRAF6</scope>
    <scope>INDUCTION</scope>
</reference>
<reference key="13">
    <citation type="journal article" date="2005" name="J. Biol. Chem.">
        <title>MEKK4 is an effector of the embryonic TRAF4 for JNK activation.</title>
        <authorList>
            <person name="Abell A.N."/>
            <person name="Johnson G.L."/>
        </authorList>
    </citation>
    <scope>FUNCTION</scope>
    <scope>SUBCELLULAR LOCATION</scope>
    <scope>INTERACTION WITH MAP3K4</scope>
</reference>
<reference key="14">
    <citation type="journal article" date="2005" name="J. Cell Biol.">
        <title>Subcellular targeting of oxidants during endothelial cell migration.</title>
        <authorList>
            <person name="Wu R.F."/>
            <person name="Xu Y.C."/>
            <person name="Ma Z."/>
            <person name="Nwariaku F.E."/>
            <person name="Sarosi G.A. Jr."/>
            <person name="Terada L.S."/>
        </authorList>
    </citation>
    <scope>INTERACTION WITH TGFB1I1</scope>
</reference>
<reference key="15">
    <citation type="journal article" date="2007" name="Cancer Biol. Ther.">
        <title>TRAF4 is potently induced by TAp63 isoforms and localised according to differentiation in SCCHN.</title>
        <authorList>
            <person name="Gu X."/>
            <person name="Coates P.J."/>
            <person name="MacCallum S.F."/>
            <person name="Boldrup L."/>
            <person name="Sjostrom B."/>
            <person name="Nylander K."/>
        </authorList>
    </citation>
    <scope>SUBCELLULAR LOCATION</scope>
</reference>
<reference key="16">
    <citation type="journal article" date="2008" name="PLoS ONE">
        <title>Tumor necrosis factor receptor-associated factor 4 is a dynamic tight junction-related shuttle protein involved in epithelium homeostasis.</title>
        <authorList>
            <person name="Kedinger V."/>
            <person name="Alpy F."/>
            <person name="Baguet A."/>
            <person name="Polette M."/>
            <person name="Stoll I."/>
            <person name="Chenard M.P."/>
            <person name="Tomasetto C."/>
            <person name="Rio M.C."/>
        </authorList>
    </citation>
    <scope>FUNCTION</scope>
    <scope>SUBCELLULAR LOCATION</scope>
</reference>
<reference key="17">
    <citation type="journal article" date="2008" name="Proc. Natl. Acad. Sci. U.S.A.">
        <title>A quantitative atlas of mitotic phosphorylation.</title>
        <authorList>
            <person name="Dephoure N."/>
            <person name="Zhou C."/>
            <person name="Villen J."/>
            <person name="Beausoleil S.A."/>
            <person name="Bakalarski C.E."/>
            <person name="Elledge S.J."/>
            <person name="Gygi S.P."/>
        </authorList>
    </citation>
    <scope>PHOSPHORYLATION [LARGE SCALE ANALYSIS] AT SER-426</scope>
    <scope>IDENTIFICATION BY MASS SPECTROMETRY [LARGE SCALE ANALYSIS]</scope>
    <source>
        <tissue>Cervix carcinoma</tissue>
    </source>
</reference>
<reference key="18">
    <citation type="journal article" date="2010" name="Mol. Cell. Biochem.">
        <title>Ubiquitin ligase Smurf1 targets TRAF family proteins for ubiquitination and degradation.</title>
        <authorList>
            <person name="Li S."/>
            <person name="Lu K."/>
            <person name="Wang J."/>
            <person name="An L."/>
            <person name="Yang G."/>
            <person name="Chen H."/>
            <person name="Cui Y."/>
            <person name="Yin X."/>
            <person name="Xie P."/>
            <person name="Xing G."/>
            <person name="He F."/>
            <person name="Zhang L."/>
        </authorList>
    </citation>
    <scope>FUNCTION</scope>
    <scope>INTERACTION WITH SMURF1</scope>
    <scope>UBIQUITINATION</scope>
</reference>
<reference key="19">
    <citation type="journal article" date="2010" name="Sci. Signal.">
        <title>Quantitative phosphoproteomics reveals widespread full phosphorylation site occupancy during mitosis.</title>
        <authorList>
            <person name="Olsen J.V."/>
            <person name="Vermeulen M."/>
            <person name="Santamaria A."/>
            <person name="Kumar C."/>
            <person name="Miller M.L."/>
            <person name="Jensen L.J."/>
            <person name="Gnad F."/>
            <person name="Cox J."/>
            <person name="Jensen T.S."/>
            <person name="Nigg E.A."/>
            <person name="Brunak S."/>
            <person name="Mann M."/>
        </authorList>
    </citation>
    <scope>PHOSPHORYLATION [LARGE SCALE ANALYSIS] AT SER-426</scope>
    <scope>IDENTIFICATION BY MASS SPECTROMETRY [LARGE SCALE ANALYSIS]</scope>
    <source>
        <tissue>Cervix carcinoma</tissue>
    </source>
</reference>
<reference key="20">
    <citation type="journal article" date="2011" name="J. Thromb. Haemost.">
        <title>TNF receptor-associated factor 4 (TRAF4) is a novel binding partner of glycoprotein Ib and glycoprotein VI in human platelets.</title>
        <authorList>
            <person name="Arthur J.F."/>
            <person name="Shen Y."/>
            <person name="Gardiner E.E."/>
            <person name="Coleman L."/>
            <person name="Murphy D."/>
            <person name="Kenny D."/>
            <person name="Andrews R.K."/>
            <person name="Berndt M.C."/>
        </authorList>
    </citation>
    <scope>FUNCTION</scope>
    <scope>INTERACTION WITH GP1BB AND GP6</scope>
</reference>
<reference key="21">
    <citation type="journal article" date="2013" name="J. Proteome Res.">
        <title>Toward a comprehensive characterization of a human cancer cell phosphoproteome.</title>
        <authorList>
            <person name="Zhou H."/>
            <person name="Di Palma S."/>
            <person name="Preisinger C."/>
            <person name="Peng M."/>
            <person name="Polat A.N."/>
            <person name="Heck A.J."/>
            <person name="Mohammed S."/>
        </authorList>
    </citation>
    <scope>PHOSPHORYLATION [LARGE SCALE ANALYSIS] AT SER-426</scope>
    <scope>IDENTIFICATION BY MASS SPECTROMETRY [LARGE SCALE ANALYSIS]</scope>
    <source>
        <tissue>Cervix carcinoma</tissue>
    </source>
</reference>
<reference key="22">
    <citation type="journal article" date="2018" name="Proc. Natl. Acad. Sci. U.S.A.">
        <title>TRAF4 binds to the juxtamembrane region of EGFR directly and promotes kinase activation.</title>
        <authorList>
            <person name="Cai G."/>
            <person name="Zhu L."/>
            <person name="Chen X."/>
            <person name="Sun K."/>
            <person name="Liu C."/>
            <person name="Sen G.C."/>
            <person name="Stark G.R."/>
            <person name="Qin J."/>
            <person name="Li X."/>
        </authorList>
    </citation>
    <scope>FUNCTION</scope>
    <scope>INTERACTION WITH EGFR</scope>
</reference>
<reference key="23">
    <citation type="journal article" date="2019" name="Cell Death Differ.">
        <title>TRAF4 positively regulates the osteogenic differentiation of mesenchymal stem cells by acting as an E3 ubiquitin ligase to degrade Smurf2.</title>
        <authorList>
            <person name="Li J."/>
            <person name="Wang P."/>
            <person name="Xie Z."/>
            <person name="Wang S."/>
            <person name="Cen S."/>
            <person name="Li M."/>
            <person name="Liu W."/>
            <person name="Tang S."/>
            <person name="Ye G."/>
            <person name="Zheng G."/>
            <person name="Su H."/>
            <person name="Ma M."/>
            <person name="Wu X."/>
            <person name="Wu Y."/>
            <person name="Shen H."/>
        </authorList>
    </citation>
    <scope>FUNCTION</scope>
    <scope>CATALYTIC ACTIVITY</scope>
</reference>
<reference key="24">
    <citation type="journal article" date="2020" name="J. Hematol. Oncol.">
        <title>Ubiquitination of the DNA-damage checkpoint kinase CHK1 by TRAF4 is required for CHK1 activation.</title>
        <authorList>
            <person name="Yu X."/>
            <person name="Li W."/>
            <person name="Liu H."/>
            <person name="Deng Q."/>
            <person name="Wang X."/>
            <person name="Hu H."/>
            <person name="Xu-Monette Z.Y."/>
            <person name="Xiong W."/>
            <person name="Lu Z."/>
            <person name="Young K.H."/>
            <person name="Wang W."/>
            <person name="Li Y."/>
        </authorList>
    </citation>
    <scope>FUNCTION</scope>
    <scope>CATALYTIC ACTIVITY</scope>
    <scope>MUTAGENESIS OF CYS-18</scope>
</reference>
<reference key="25">
    <citation type="journal article" date="2020" name="EBioMedicine">
        <title>TRAF4 acts as a fate checkpoint to regulate the adipogenic differentiation of MSCs by activating PKM2.</title>
        <authorList>
            <person name="Cen S."/>
            <person name="Li J."/>
            <person name="Cai Z."/>
            <person name="Pan Y."/>
            <person name="Sun Z."/>
            <person name="Li Z."/>
            <person name="Ye G."/>
            <person name="Zheng G."/>
            <person name="Li M."/>
            <person name="Liu W."/>
            <person name="Yu W."/>
            <person name="Wang S."/>
            <person name="Xie Z."/>
            <person name="Wang P."/>
            <person name="Shen H."/>
        </authorList>
    </citation>
    <scope>FUNCTION</scope>
    <scope>INTERACTION WITH PKM</scope>
    <scope>SUBCELLULAR LOCATION</scope>
</reference>
<reference key="26">
    <citation type="journal article" date="2021" name="J. Biol. Chem.">
        <title>The E3 ligase TRAF4 Promotes IGF Signaling by Mediating Atypical Ubiquitination of IRS-1.</title>
        <authorList>
            <person name="Yu W."/>
            <person name="Singh R."/>
            <person name="Wang Z."/>
            <person name="O'Malley B.W."/>
            <person name="Yi P."/>
        </authorList>
    </citation>
    <scope>FUNCTION</scope>
    <scope>CATALYTIC ACTIVITY</scope>
</reference>
<reference key="27">
    <citation type="submission" date="2008-04" db="PDB data bank">
        <title>Solution structure of TRAF-type zinc finger domains from human TNF receptor-associated factor 4.</title>
        <authorList>
            <consortium name="RIKEN structural genomics initiative (RSGI)"/>
        </authorList>
    </citation>
    <scope>STRUCTURE BY NMR OF 101-248</scope>
</reference>
<reference evidence="29" key="28">
    <citation type="journal article" date="2017" name="Proc. Natl. Acad. Sci. U.S.A.">
        <title>Molecular basis for unique specificity of human TRAF4 for platelets GPIbbeta and GPVI.</title>
        <authorList>
            <person name="Kim C.M."/>
            <person name="Son Y.J."/>
            <person name="Kim S."/>
            <person name="Kim S.Y."/>
            <person name="Park H.H."/>
        </authorList>
    </citation>
    <scope>X-RAY CRYSTALLOGRAPHY (2.51 ANGSTROMS) OF 290-470</scope>
    <scope>INTERACTION WITH GP1BB AND GP6</scope>
</reference>
<keyword id="KW-0002">3D-structure</keyword>
<keyword id="KW-0025">Alternative splicing</keyword>
<keyword id="KW-0053">Apoptosis</keyword>
<keyword id="KW-0965">Cell junction</keyword>
<keyword id="KW-1003">Cell membrane</keyword>
<keyword id="KW-0175">Coiled coil</keyword>
<keyword id="KW-0963">Cytoplasm</keyword>
<keyword id="KW-0206">Cytoskeleton</keyword>
<keyword id="KW-0217">Developmental protein</keyword>
<keyword id="KW-0391">Immunity</keyword>
<keyword id="KW-0399">Innate immunity</keyword>
<keyword id="KW-1017">Isopeptide bond</keyword>
<keyword id="KW-0472">Membrane</keyword>
<keyword id="KW-0479">Metal-binding</keyword>
<keyword id="KW-0539">Nucleus</keyword>
<keyword id="KW-0597">Phosphoprotein</keyword>
<keyword id="KW-1267">Proteomics identification</keyword>
<keyword id="KW-1185">Reference proteome</keyword>
<keyword id="KW-0677">Repeat</keyword>
<keyword id="KW-0796">Tight junction</keyword>
<keyword id="KW-0808">Transferase</keyword>
<keyword id="KW-0832">Ubl conjugation</keyword>
<keyword id="KW-0833">Ubl conjugation pathway</keyword>
<keyword id="KW-0862">Zinc</keyword>
<keyword id="KW-0863">Zinc-finger</keyword>
<comment type="function">
    <text evidence="1 8 9 10 11 13 14 17 18 19 20 21">Adapter protein with E3 ligase activity that is involved in many diverse biological processes including cell proliferation, migration, differentiation, DNA repair, platelet activation or apoptosis (PubMed:30352854, PubMed:31076633, PubMed:32268273, PubMed:33991522). Promotes EGFR-mediated signaling by facilitating the dimerization of EGFR and downstream AKT activation thereby promoting cell proliferation (PubMed:30352854). Ubiquitinates SMURF2 through 'Lys-48'-linked ubiquitin chain leading to SMURF2 degradation through the proteasome and subsequently osteogenic differentiation (PubMed:31076633). Promotes 'Lys-63'-mediated ubiquitination of CHK1 which in turn activates cell cycle arrest and activation of DNA repair (PubMed:32357935). In addition, promotes an atypical 'Lys-29'-linked ubiquitination at the C-terminal end of IRS1 which is crucial for insulin-like growth factor (IGF) signal transduction (PubMed:33991522). Regulates activation of NF-kappa-B in response to signaling through Toll-like receptors. Required for normal skeleton development, and for normal development of the respiratory tract (By similarity). Required for activation of RPS6KB1 in response to TNF signaling. Modulates TRAF6 functions. Inhibits adipogenic differentiation by activating pyruvate kinase PKM activity and subsequently the beta-catenin signaling pathway (PubMed:32268273).</text>
</comment>
<comment type="catalytic activity">
    <reaction evidence="18 20 21">
        <text>S-ubiquitinyl-[E2 ubiquitin-conjugating enzyme]-L-cysteine + [acceptor protein]-L-lysine = [E2 ubiquitin-conjugating enzyme]-L-cysteine + N(6)-ubiquitinyl-[acceptor protein]-L-lysine.</text>
        <dbReference type="EC" id="2.3.2.27"/>
    </reaction>
</comment>
<comment type="pathway">
    <text evidence="18 20 21">Protein degradation; proteasomal ubiquitin-dependent pathway.</text>
</comment>
<comment type="subunit">
    <text evidence="7 8 9 10 11 12 14 15 16 19 24 28">Homotrimer (Probable). Interacts with LTBR/TNFRSF3, NGFR/TNFRSF16, RPS6KB1 and TGFB1I1. Interacts with SMURF1. Interacts (via TRAF domain) with MAP3K4 (via kinase domain). Interacts with NCF1, TICAM1, IRAK1 and TRAF6, and is probably part of a complex containing TRAF4, NCF1, TICAM1, IRAK1 and TRAF6. Interacts (via MATH domain) with GP6 and GP1BB (PubMed:20946164, PubMed:29073066). Interacts with EGFR (via C-terminal region); this interaction promotes the formation of EGFR asymmetric dimers (PubMed:30352854). Interacts with PKM; this interaction promotes PKM kinase activity (PubMed:32268273).</text>
</comment>
<comment type="interaction">
    <interactant intactId="EBI-3650647">
        <id>Q9BUZ4</id>
    </interactant>
    <interactant intactId="EBI-742038">
        <id>Q9P2A4</id>
        <label>ABI3</label>
    </interactant>
    <organismsDiffer>false</organismsDiffer>
    <experiments>3</experiments>
</comment>
<comment type="interaction">
    <interactant intactId="EBI-3650647">
        <id>Q9BUZ4</id>
    </interactant>
    <interactant intactId="EBI-11976299">
        <id>Q5BKX5-3</id>
        <label>ACTMAP</label>
    </interactant>
    <organismsDiffer>false</organismsDiffer>
    <experiments>3</experiments>
</comment>
<comment type="interaction">
    <interactant intactId="EBI-3650647">
        <id>Q9BUZ4</id>
    </interactant>
    <interactant intactId="EBI-8637516">
        <id>Q9NXW9</id>
        <label>ALKBH4</label>
    </interactant>
    <organismsDiffer>false</organismsDiffer>
    <experiments>4</experiments>
</comment>
<comment type="interaction">
    <interactant intactId="EBI-3650647">
        <id>Q9BUZ4</id>
    </interactant>
    <interactant intactId="EBI-745689">
        <id>Q7L5A3</id>
        <label>ATOSB</label>
    </interactant>
    <organismsDiffer>false</organismsDiffer>
    <experiments>5</experiments>
</comment>
<comment type="interaction">
    <interactant intactId="EBI-3650647">
        <id>Q9BUZ4</id>
    </interactant>
    <interactant intactId="EBI-1642333">
        <id>Q9BYV9</id>
        <label>BACH2</label>
    </interactant>
    <organismsDiffer>false</organismsDiffer>
    <experiments>3</experiments>
</comment>
<comment type="interaction">
    <interactant intactId="EBI-3650647">
        <id>Q9BUZ4</id>
    </interactant>
    <interactant intactId="EBI-742750">
        <id>Q8TBE0</id>
        <label>BAHD1</label>
    </interactant>
    <organismsDiffer>false</organismsDiffer>
    <experiments>6</experiments>
</comment>
<comment type="interaction">
    <interactant intactId="EBI-3650647">
        <id>Q9BUZ4</id>
    </interactant>
    <interactant intactId="EBI-16429704">
        <id>A0A0S2Z5G4</id>
        <label>BANP</label>
    </interactant>
    <organismsDiffer>false</organismsDiffer>
    <experiments>3</experiments>
</comment>
<comment type="interaction">
    <interactant intactId="EBI-3650647">
        <id>Q9BUZ4</id>
    </interactant>
    <interactant intactId="EBI-16429313">
        <id>B4DE54</id>
        <label>BANP</label>
    </interactant>
    <organismsDiffer>false</organismsDiffer>
    <experiments>3</experiments>
</comment>
<comment type="interaction">
    <interactant intactId="EBI-3650647">
        <id>Q9BUZ4</id>
    </interactant>
    <interactant intactId="EBI-744695">
        <id>Q8N9N5</id>
        <label>BANP</label>
    </interactant>
    <organismsDiffer>false</organismsDiffer>
    <experiments>3</experiments>
</comment>
<comment type="interaction">
    <interactant intactId="EBI-3650647">
        <id>Q9BUZ4</id>
    </interactant>
    <interactant intactId="EBI-11524452">
        <id>Q8N9N5-2</id>
        <label>BANP</label>
    </interactant>
    <organismsDiffer>false</organismsDiffer>
    <experiments>6</experiments>
</comment>
<comment type="interaction">
    <interactant intactId="EBI-3650647">
        <id>Q9BUZ4</id>
    </interactant>
    <interactant intactId="EBI-16429296">
        <id>Q8N9N5-7</id>
        <label>BANP</label>
    </interactant>
    <organismsDiffer>false</organismsDiffer>
    <experiments>3</experiments>
</comment>
<comment type="interaction">
    <interactant intactId="EBI-3650647">
        <id>Q9BUZ4</id>
    </interactant>
    <interactant intactId="EBI-10174813">
        <id>A8KA13</id>
        <label>BCL6B</label>
    </interactant>
    <organismsDiffer>false</organismsDiffer>
    <experiments>3</experiments>
</comment>
<comment type="interaction">
    <interactant intactId="EBI-3650647">
        <id>Q9BUZ4</id>
    </interactant>
    <interactant intactId="EBI-742722">
        <id>Q9BUH8</id>
        <label>BEGAIN</label>
    </interactant>
    <organismsDiffer>false</organismsDiffer>
    <experiments>3</experiments>
</comment>
<comment type="interaction">
    <interactant intactId="EBI-3650647">
        <id>Q9BUZ4</id>
    </interactant>
    <interactant intactId="EBI-358049">
        <id>Q13895</id>
        <label>BYSL</label>
    </interactant>
    <organismsDiffer>false</organismsDiffer>
    <experiments>9</experiments>
</comment>
<comment type="interaction">
    <interactant intactId="EBI-3650647">
        <id>Q9BUZ4</id>
    </interactant>
    <interactant intactId="EBI-745541">
        <id>Q8N187</id>
        <label>CARF</label>
    </interactant>
    <organismsDiffer>false</organismsDiffer>
    <experiments>3</experiments>
</comment>
<comment type="interaction">
    <interactant intactId="EBI-3650647">
        <id>Q9BUZ4</id>
    </interactant>
    <interactant intactId="EBI-12368239">
        <id>Q6P2H3-3</id>
        <label>CEP85</label>
    </interactant>
    <organismsDiffer>false</organismsDiffer>
    <experiments>3</experiments>
</comment>
<comment type="interaction">
    <interactant intactId="EBI-3650647">
        <id>Q9BUZ4</id>
    </interactant>
    <interactant intactId="EBI-11988027">
        <id>Q9NRI5-2</id>
        <label>DISC1</label>
    </interactant>
    <organismsDiffer>false</organismsDiffer>
    <experiments>3</experiments>
</comment>
<comment type="interaction">
    <interactant intactId="EBI-3650647">
        <id>Q9BUZ4</id>
    </interactant>
    <interactant intactId="EBI-346547">
        <id>P50570</id>
        <label>DNM2</label>
    </interactant>
    <organismsDiffer>false</organismsDiffer>
    <experiments>3</experiments>
</comment>
<comment type="interaction">
    <interactant intactId="EBI-3650647">
        <id>Q9BUZ4</id>
    </interactant>
    <interactant intactId="EBI-10968534">
        <id>P50570-2</id>
        <label>DNM2</label>
    </interactant>
    <organismsDiffer>false</organismsDiffer>
    <experiments>3</experiments>
</comment>
<comment type="interaction">
    <interactant intactId="EBI-3650647">
        <id>Q9BUZ4</id>
    </interactant>
    <interactant intactId="EBI-18398199">
        <id>A0A0U1RQF7</id>
        <label>DPEP2NB</label>
    </interactant>
    <organismsDiffer>false</organismsDiffer>
    <experiments>3</experiments>
</comment>
<comment type="interaction">
    <interactant intactId="EBI-3650647">
        <id>Q9BUZ4</id>
    </interactant>
    <interactant intactId="EBI-2340258">
        <id>Q8N9I9</id>
        <label>DTX3</label>
    </interactant>
    <organismsDiffer>false</organismsDiffer>
    <experiments>4</experiments>
</comment>
<comment type="interaction">
    <interactant intactId="EBI-3650647">
        <id>Q9BUZ4</id>
    </interactant>
    <interactant intactId="EBI-10282504">
        <id>Q96BU6</id>
        <label>EXOC7</label>
    </interactant>
    <organismsDiffer>false</organismsDiffer>
    <experiments>3</experiments>
</comment>
<comment type="interaction">
    <interactant intactId="EBI-3650647">
        <id>Q9BUZ4</id>
    </interactant>
    <interactant intactId="EBI-12807776">
        <id>O00167-2</id>
        <label>EYA2</label>
    </interactant>
    <organismsDiffer>false</organismsDiffer>
    <experiments>3</experiments>
</comment>
<comment type="interaction">
    <interactant intactId="EBI-3650647">
        <id>Q9BUZ4</id>
    </interactant>
    <interactant intactId="EBI-12827735">
        <id>Q86X51</id>
        <label>EZHIP</label>
    </interactant>
    <organismsDiffer>false</organismsDiffer>
    <experiments>3</experiments>
</comment>
<comment type="interaction">
    <interactant intactId="EBI-3650647">
        <id>Q9BUZ4</id>
    </interactant>
    <interactant intactId="EBI-744419">
        <id>Q96D16</id>
        <label>FBXL18</label>
    </interactant>
    <organismsDiffer>false</organismsDiffer>
    <experiments>3</experiments>
</comment>
<comment type="interaction">
    <interactant intactId="EBI-3650647">
        <id>Q9BUZ4</id>
    </interactant>
    <interactant intactId="EBI-725515">
        <id>O43559</id>
        <label>FRS3</label>
    </interactant>
    <organismsDiffer>false</organismsDiffer>
    <experiments>3</experiments>
</comment>
<comment type="interaction">
    <interactant intactId="EBI-3650647">
        <id>Q9BUZ4</id>
    </interactant>
    <interactant intactId="EBI-618309">
        <id>Q08379</id>
        <label>GOLGA2</label>
    </interactant>
    <organismsDiffer>false</organismsDiffer>
    <experiments>5</experiments>
</comment>
<comment type="interaction">
    <interactant intactId="EBI-3650647">
        <id>Q9BUZ4</id>
    </interactant>
    <interactant intactId="EBI-11163335">
        <id>Q9NYA3</id>
        <label>GOLGA6A</label>
    </interactant>
    <organismsDiffer>false</organismsDiffer>
    <experiments>3</experiments>
</comment>
<comment type="interaction">
    <interactant intactId="EBI-3650647">
        <id>Q9BUZ4</id>
    </interactant>
    <interactant intactId="EBI-5916454">
        <id>A6NEM1</id>
        <label>GOLGA6L9</label>
    </interactant>
    <organismsDiffer>false</organismsDiffer>
    <experiments>3</experiments>
</comment>
<comment type="interaction">
    <interactant intactId="EBI-3650647">
        <id>Q9BUZ4</id>
    </interactant>
    <interactant intactId="EBI-2561458">
        <id>Q9BQQ3</id>
        <label>GORASP1</label>
    </interactant>
    <organismsDiffer>false</organismsDiffer>
    <experiments>3</experiments>
</comment>
<comment type="interaction">
    <interactant intactId="EBI-3650647">
        <id>Q9BUZ4</id>
    </interactant>
    <interactant intactId="EBI-739467">
        <id>Q9H8Y8</id>
        <label>GORASP2</label>
    </interactant>
    <organismsDiffer>false</organismsDiffer>
    <experiments>4</experiments>
</comment>
<comment type="interaction">
    <interactant intactId="EBI-3650647">
        <id>Q9BUZ4</id>
    </interactant>
    <interactant intactId="EBI-750630">
        <id>Q9UBP5</id>
        <label>HEY2</label>
    </interactant>
    <organismsDiffer>false</organismsDiffer>
    <experiments>3</experiments>
</comment>
<comment type="interaction">
    <interactant intactId="EBI-3650647">
        <id>Q9BUZ4</id>
    </interactant>
    <interactant intactId="EBI-16429135">
        <id>A0A0S2Z4Q4</id>
        <label>HGS</label>
    </interactant>
    <organismsDiffer>false</organismsDiffer>
    <experiments>3</experiments>
</comment>
<comment type="interaction">
    <interactant intactId="EBI-3650647">
        <id>Q9BUZ4</id>
    </interactant>
    <interactant intactId="EBI-740220">
        <id>O14964</id>
        <label>HGS</label>
    </interactant>
    <organismsDiffer>false</organismsDiffer>
    <experiments>6</experiments>
</comment>
<comment type="interaction">
    <interactant intactId="EBI-3650647">
        <id>Q9BUZ4</id>
    </interactant>
    <interactant intactId="EBI-740641">
        <id>Q9NP66</id>
        <label>HMG20A</label>
    </interactant>
    <organismsDiffer>false</organismsDiffer>
    <experiments>3</experiments>
</comment>
<comment type="interaction">
    <interactant intactId="EBI-3650647">
        <id>Q9BUZ4</id>
    </interactant>
    <interactant intactId="EBI-10172004">
        <id>Q8IX15-3</id>
        <label>HOMEZ</label>
    </interactant>
    <organismsDiffer>false</organismsDiffer>
    <experiments>3</experiments>
</comment>
<comment type="interaction">
    <interactant intactId="EBI-3650647">
        <id>Q9BUZ4</id>
    </interactant>
    <interactant intactId="EBI-740785">
        <id>P49639</id>
        <label>HOXA1</label>
    </interactant>
    <organismsDiffer>false</organismsDiffer>
    <experiments>3</experiments>
</comment>
<comment type="interaction">
    <interactant intactId="EBI-3650647">
        <id>Q9BUZ4</id>
    </interactant>
    <interactant intactId="EBI-3893317">
        <id>P09067</id>
        <label>HOXB5</label>
    </interactant>
    <organismsDiffer>false</organismsDiffer>
    <experiments>3</experiments>
</comment>
<comment type="interaction">
    <interactant intactId="EBI-3650647">
        <id>Q9BUZ4</id>
    </interactant>
    <interactant intactId="EBI-720563">
        <id>Q9NPH2</id>
        <label>ISYNA1</label>
    </interactant>
    <organismsDiffer>false</organismsDiffer>
    <experiments>6</experiments>
</comment>
<comment type="interaction">
    <interactant intactId="EBI-3650647">
        <id>Q9BUZ4</id>
    </interactant>
    <interactant intactId="EBI-2556193">
        <id>Q63ZY3</id>
        <label>KANK2</label>
    </interactant>
    <organismsDiffer>false</organismsDiffer>
    <experiments>3</experiments>
</comment>
<comment type="interaction">
    <interactant intactId="EBI-3650647">
        <id>Q9BUZ4</id>
    </interactant>
    <interactant intactId="EBI-740244">
        <id>Q7Z3B3</id>
        <label>KANSL1</label>
    </interactant>
    <organismsDiffer>false</organismsDiffer>
    <experiments>3</experiments>
</comment>
<comment type="interaction">
    <interactant intactId="EBI-3650647">
        <id>Q9BUZ4</id>
    </interactant>
    <interactant intactId="EBI-710124">
        <id>O60341</id>
        <label>KDM1A</label>
    </interactant>
    <organismsDiffer>false</organismsDiffer>
    <experiments>4</experiments>
</comment>
<comment type="interaction">
    <interactant intactId="EBI-3650647">
        <id>Q9BUZ4</id>
    </interactant>
    <interactant intactId="EBI-948001">
        <id>Q15323</id>
        <label>KRT31</label>
    </interactant>
    <organismsDiffer>false</organismsDiffer>
    <experiments>6</experiments>
</comment>
<comment type="interaction">
    <interactant intactId="EBI-3650647">
        <id>Q9BUZ4</id>
    </interactant>
    <interactant intactId="EBI-11958506">
        <id>O76013-2</id>
        <label>KRT36</label>
    </interactant>
    <organismsDiffer>false</organismsDiffer>
    <experiments>3</experiments>
</comment>
<comment type="interaction">
    <interactant intactId="EBI-3650647">
        <id>Q9BUZ4</id>
    </interactant>
    <interactant intactId="EBI-10171697">
        <id>Q6A162</id>
        <label>KRT40</label>
    </interactant>
    <organismsDiffer>false</organismsDiffer>
    <experiments>7</experiments>
</comment>
<comment type="interaction">
    <interactant intactId="EBI-3650647">
        <id>Q9BUZ4</id>
    </interactant>
    <interactant intactId="EBI-739546">
        <id>Q96PV6</id>
        <label>LENG8</label>
    </interactant>
    <organismsDiffer>false</organismsDiffer>
    <experiments>3</experiments>
</comment>
<comment type="interaction">
    <interactant intactId="EBI-3650647">
        <id>Q9BUZ4</id>
    </interactant>
    <interactant intactId="EBI-739832">
        <id>Q8TBB1</id>
        <label>LNX1</label>
    </interactant>
    <organismsDiffer>false</organismsDiffer>
    <experiments>3</experiments>
</comment>
<comment type="interaction">
    <interactant intactId="EBI-3650647">
        <id>Q9BUZ4</id>
    </interactant>
    <interactant intactId="EBI-723426">
        <id>Q13084</id>
        <label>MRPL28</label>
    </interactant>
    <organismsDiffer>false</organismsDiffer>
    <experiments>4</experiments>
</comment>
<comment type="interaction">
    <interactant intactId="EBI-3650647">
        <id>Q9BUZ4</id>
    </interactant>
    <interactant intactId="EBI-395044">
        <id>P14598</id>
        <label>NCF1</label>
    </interactant>
    <organismsDiffer>false</organismsDiffer>
    <experiments>5</experiments>
</comment>
<comment type="interaction">
    <interactant intactId="EBI-3650647">
        <id>Q9BUZ4</id>
    </interactant>
    <interactant intactId="EBI-1149760">
        <id>Q15599</id>
        <label>NHERF2</label>
    </interactant>
    <organismsDiffer>false</organismsDiffer>
    <experiments>3</experiments>
</comment>
<comment type="interaction">
    <interactant intactId="EBI-3650647">
        <id>Q9BUZ4</id>
    </interactant>
    <interactant intactId="EBI-780467">
        <id>O75052</id>
        <label>NOS1AP</label>
    </interactant>
    <organismsDiffer>false</organismsDiffer>
    <experiments>3</experiments>
</comment>
<comment type="interaction">
    <interactant intactId="EBI-3650647">
        <id>Q9BUZ4</id>
    </interactant>
    <interactant intactId="EBI-10177044">
        <id>E9PJI5</id>
        <label>NPIPA7</label>
    </interactant>
    <organismsDiffer>false</organismsDiffer>
    <experiments>3</experiments>
</comment>
<comment type="interaction">
    <interactant intactId="EBI-3650647">
        <id>Q9BUZ4</id>
    </interactant>
    <interactant intactId="EBI-2949792">
        <id>Q9BRJ7</id>
        <label>NUDT16L1</label>
    </interactant>
    <organismsDiffer>false</organismsDiffer>
    <experiments>3</experiments>
</comment>
<comment type="interaction">
    <interactant intactId="EBI-3650647">
        <id>Q9BUZ4</id>
    </interactant>
    <interactant intactId="EBI-11956269">
        <id>Q92824-2</id>
        <label>PCSK5</label>
    </interactant>
    <organismsDiffer>false</organismsDiffer>
    <experiments>3</experiments>
</comment>
<comment type="interaction">
    <interactant intactId="EBI-3650647">
        <id>Q9BUZ4</id>
    </interactant>
    <interactant intactId="EBI-14084211">
        <id>A2BDE7</id>
        <label>PHLDA1</label>
    </interactant>
    <organismsDiffer>false</organismsDiffer>
    <experiments>3</experiments>
</comment>
<comment type="interaction">
    <interactant intactId="EBI-3650647">
        <id>Q9BUZ4</id>
    </interactant>
    <interactant intactId="EBI-79165">
        <id>Q9NRD5</id>
        <label>PICK1</label>
    </interactant>
    <organismsDiffer>false</organismsDiffer>
    <experiments>3</experiments>
</comment>
<comment type="interaction">
    <interactant intactId="EBI-3650647">
        <id>Q9BUZ4</id>
    </interactant>
    <interactant intactId="EBI-2876622">
        <id>Q9UPG8</id>
        <label>PLAGL2</label>
    </interactant>
    <organismsDiffer>false</organismsDiffer>
    <experiments>3</experiments>
</comment>
<comment type="interaction">
    <interactant intactId="EBI-3650647">
        <id>Q9BUZ4</id>
    </interactant>
    <interactant intactId="EBI-12069346">
        <id>Q6IQ23-2</id>
        <label>PLEKHA7</label>
    </interactant>
    <organismsDiffer>false</organismsDiffer>
    <experiments>3</experiments>
</comment>
<comment type="interaction">
    <interactant intactId="EBI-3650647">
        <id>Q9BUZ4</id>
    </interactant>
    <interactant intactId="EBI-394753">
        <id>P52435</id>
        <label>POLR2J</label>
    </interactant>
    <organismsDiffer>false</organismsDiffer>
    <experiments>3</experiments>
</comment>
<comment type="interaction">
    <interactant intactId="EBI-3650647">
        <id>Q9BUZ4</id>
    </interactant>
    <interactant intactId="EBI-12818681">
        <id>Q9H1A7</id>
        <label>POLR2J3</label>
    </interactant>
    <organismsDiffer>false</organismsDiffer>
    <experiments>3</experiments>
</comment>
<comment type="interaction">
    <interactant intactId="EBI-3650647">
        <id>Q9BUZ4</id>
    </interactant>
    <interactant intactId="EBI-359720">
        <id>P17980</id>
        <label>PSMC3</label>
    </interactant>
    <organismsDiffer>false</organismsDiffer>
    <experiments>6</experiments>
</comment>
<comment type="interaction">
    <interactant intactId="EBI-3650647">
        <id>Q9BUZ4</id>
    </interactant>
    <interactant intactId="EBI-347462">
        <id>P47897</id>
        <label>QARS1</label>
    </interactant>
    <organismsDiffer>false</organismsDiffer>
    <experiments>6</experiments>
</comment>
<comment type="interaction">
    <interactant intactId="EBI-3650647">
        <id>Q9BUZ4</id>
    </interactant>
    <interactant intactId="EBI-10209725">
        <id>P47897-2</id>
        <label>QARS1</label>
    </interactant>
    <organismsDiffer>false</organismsDiffer>
    <experiments>3</experiments>
</comment>
<comment type="interaction">
    <interactant intactId="EBI-3650647">
        <id>Q9BUZ4</id>
    </interactant>
    <interactant intactId="EBI-948156">
        <id>Q9Y4B4</id>
        <label>RAD54L2</label>
    </interactant>
    <organismsDiffer>false</organismsDiffer>
    <experiments>3</experiments>
</comment>
<comment type="interaction">
    <interactant intactId="EBI-3650647">
        <id>Q9BUZ4</id>
    </interactant>
    <interactant intactId="EBI-10262361">
        <id>Q8IX06</id>
        <label>REXO1L1P</label>
    </interactant>
    <organismsDiffer>false</organismsDiffer>
    <experiments>3</experiments>
</comment>
<comment type="interaction">
    <interactant intactId="EBI-3650647">
        <id>Q9BUZ4</id>
    </interactant>
    <interactant intactId="EBI-2340927">
        <id>P78317</id>
        <label>RNF4</label>
    </interactant>
    <organismsDiffer>false</organismsDiffer>
    <experiments>5</experiments>
</comment>
<comment type="interaction">
    <interactant intactId="EBI-3650647">
        <id>Q9BUZ4</id>
    </interactant>
    <interactant intactId="EBI-348469">
        <id>Q15427</id>
        <label>SF3B4</label>
    </interactant>
    <organismsDiffer>false</organismsDiffer>
    <experiments>3</experiments>
</comment>
<comment type="interaction">
    <interactant intactId="EBI-3650647">
        <id>Q9BUZ4</id>
    </interactant>
    <interactant intactId="EBI-9845742">
        <id>Q9HCE7-2</id>
        <label>SMURF1</label>
    </interactant>
    <organismsDiffer>false</organismsDiffer>
    <experiments>4</experiments>
</comment>
<comment type="interaction">
    <interactant intactId="EBI-3650647">
        <id>Q9BUZ4</id>
    </interactant>
    <interactant intactId="EBI-372475">
        <id>P14678-2</id>
        <label>SNRPB</label>
    </interactant>
    <organismsDiffer>false</organismsDiffer>
    <experiments>3</experiments>
</comment>
<comment type="interaction">
    <interactant intactId="EBI-3650647">
        <id>Q9BUZ4</id>
    </interactant>
    <interactant intactId="EBI-715381">
        <id>Q96EA4</id>
        <label>SPDL1</label>
    </interactant>
    <organismsDiffer>false</organismsDiffer>
    <experiments>3</experiments>
</comment>
<comment type="interaction">
    <interactant intactId="EBI-3650647">
        <id>Q9BUZ4</id>
    </interactant>
    <interactant intactId="EBI-80140">
        <id>P63165</id>
        <label>SUMO1</label>
    </interactant>
    <organismsDiffer>false</organismsDiffer>
    <experiments>3</experiments>
</comment>
<comment type="interaction">
    <interactant intactId="EBI-3650647">
        <id>Q9BUZ4</id>
    </interactant>
    <interactant intactId="EBI-529518">
        <id>Q86VP1</id>
        <label>TAX1BP1</label>
    </interactant>
    <organismsDiffer>false</organismsDiffer>
    <experiments>3</experiments>
</comment>
<comment type="interaction">
    <interactant intactId="EBI-3650647">
        <id>Q9BUZ4</id>
    </interactant>
    <interactant intactId="EBI-3258000">
        <id>Q9P0N9</id>
        <label>TBC1D7</label>
    </interactant>
    <organismsDiffer>false</organismsDiffer>
    <experiments>9</experiments>
</comment>
<comment type="interaction">
    <interactant intactId="EBI-3650647">
        <id>Q9BUZ4</id>
    </interactant>
    <interactant intactId="EBI-2514218">
        <id>Q01664</id>
        <label>TFAP4</label>
    </interactant>
    <organismsDiffer>false</organismsDiffer>
    <experiments>3</experiments>
</comment>
<comment type="interaction">
    <interactant intactId="EBI-3650647">
        <id>Q9BUZ4</id>
    </interactant>
    <interactant intactId="EBI-1051449">
        <id>O43294</id>
        <label>TGFB1I1</label>
    </interactant>
    <organismsDiffer>false</organismsDiffer>
    <experiments>8</experiments>
</comment>
<comment type="interaction">
    <interactant intactId="EBI-3650647">
        <id>Q9BUZ4</id>
    </interactant>
    <interactant intactId="EBI-25847109">
        <id>O14656-2</id>
        <label>TOR1A</label>
    </interactant>
    <organismsDiffer>false</organismsDiffer>
    <experiments>3</experiments>
</comment>
<comment type="interaction">
    <interactant intactId="EBI-3650647">
        <id>Q9BUZ4</id>
    </interactant>
    <interactant intactId="EBI-10175039">
        <id>Q13625-3</id>
        <label>TP53BP2</label>
    </interactant>
    <organismsDiffer>false</organismsDiffer>
    <experiments>3</experiments>
</comment>
<comment type="interaction">
    <interactant intactId="EBI-3650647">
        <id>Q9BUZ4</id>
    </interactant>
    <interactant intactId="EBI-2800203">
        <id>O14773</id>
        <label>TPP1</label>
    </interactant>
    <organismsDiffer>false</organismsDiffer>
    <experiments>3</experiments>
</comment>
<comment type="interaction">
    <interactant intactId="EBI-3650647">
        <id>Q9BUZ4</id>
    </interactant>
    <interactant intactId="EBI-3650647">
        <id>Q9BUZ4</id>
        <label>TRAF4</label>
    </interactant>
    <organismsDiffer>false</organismsDiffer>
    <experiments>6</experiments>
</comment>
<comment type="interaction">
    <interactant intactId="EBI-3650647">
        <id>Q9BUZ4</id>
    </interactant>
    <interactant intactId="EBI-719493">
        <id>P14373</id>
        <label>TRIM27</label>
    </interactant>
    <organismsDiffer>false</organismsDiffer>
    <experiments>3</experiments>
</comment>
<comment type="interaction">
    <interactant intactId="EBI-3650647">
        <id>Q9BUZ4</id>
    </interactant>
    <interactant intactId="EBI-10241197">
        <id>Q3SY00</id>
        <label>TSGA10IP</label>
    </interactant>
    <organismsDiffer>false</organismsDiffer>
    <experiments>3</experiments>
</comment>
<comment type="interaction">
    <interactant intactId="EBI-3650647">
        <id>Q9BUZ4</id>
    </interactant>
    <interactant intactId="EBI-1383454">
        <id>P29597</id>
        <label>TYK2</label>
    </interactant>
    <organismsDiffer>false</organismsDiffer>
    <experiments>3</experiments>
</comment>
<comment type="interaction">
    <interactant intactId="EBI-3650647">
        <id>Q9BUZ4</id>
    </interactant>
    <interactant intactId="EBI-709688">
        <id>P22314</id>
        <label>UBA1</label>
    </interactant>
    <organismsDiffer>false</organismsDiffer>
    <experiments>3</experiments>
</comment>
<comment type="interaction">
    <interactant intactId="EBI-3650647">
        <id>Q9BUZ4</id>
    </interactant>
    <interactant intactId="EBI-10180829">
        <id>Q7KZS0</id>
        <label>UBE2I</label>
    </interactant>
    <organismsDiffer>false</organismsDiffer>
    <experiments>3</experiments>
</comment>
<comment type="interaction">
    <interactant intactId="EBI-3650647">
        <id>Q9BUZ4</id>
    </interactant>
    <interactant intactId="EBI-356983">
        <id>P11441</id>
        <label>UBL4A</label>
    </interactant>
    <organismsDiffer>false</organismsDiffer>
    <experiments>6</experiments>
</comment>
<comment type="interaction">
    <interactant intactId="EBI-3650647">
        <id>Q9BUZ4</id>
    </interactant>
    <interactant intactId="EBI-10267507">
        <id>Q8N7F7</id>
        <label>UBL4B</label>
    </interactant>
    <organismsDiffer>false</organismsDiffer>
    <experiments>7</experiments>
</comment>
<comment type="interaction">
    <interactant intactId="EBI-3650647">
        <id>Q9BUZ4</id>
    </interactant>
    <interactant intactId="EBI-947187">
        <id>Q9UHD9</id>
        <label>UBQLN2</label>
    </interactant>
    <organismsDiffer>false</organismsDiffer>
    <experiments>3</experiments>
</comment>
<comment type="interaction">
    <interactant intactId="EBI-3650647">
        <id>Q9BUZ4</id>
    </interactant>
    <interactant intactId="EBI-2799833">
        <id>Q8N1B4</id>
        <label>VPS52</label>
    </interactant>
    <organismsDiffer>false</organismsDiffer>
    <experiments>3</experiments>
</comment>
<comment type="interaction">
    <interactant intactId="EBI-3650647">
        <id>Q9BUZ4</id>
    </interactant>
    <interactant intactId="EBI-714455">
        <id>Q9Y2W2</id>
        <label>WBP11</label>
    </interactant>
    <organismsDiffer>false</organismsDiffer>
    <experiments>3</experiments>
</comment>
<comment type="interaction">
    <interactant intactId="EBI-3650647">
        <id>Q9BUZ4</id>
    </interactant>
    <interactant intactId="EBI-742157">
        <id>Q9H0M0</id>
        <label>WWP1</label>
    </interactant>
    <organismsDiffer>false</organismsDiffer>
    <experiments>3</experiments>
</comment>
<comment type="interaction">
    <interactant intactId="EBI-3650647">
        <id>Q9BUZ4</id>
    </interactant>
    <interactant intactId="EBI-743923">
        <id>O00308</id>
        <label>WWP2</label>
    </interactant>
    <organismsDiffer>false</organismsDiffer>
    <experiments>7</experiments>
</comment>
<comment type="interaction">
    <interactant intactId="EBI-3650647">
        <id>Q9BUZ4</id>
    </interactant>
    <interactant intactId="EBI-711925">
        <id>Q05516</id>
        <label>ZBTB16</label>
    </interactant>
    <organismsDiffer>false</organismsDiffer>
    <experiments>3</experiments>
</comment>
<comment type="interaction">
    <interactant intactId="EBI-3650647">
        <id>Q9BUZ4</id>
    </interactant>
    <interactant intactId="EBI-3918996">
        <id>Q9HCK0</id>
        <label>ZBTB26</label>
    </interactant>
    <organismsDiffer>false</organismsDiffer>
    <experiments>3</experiments>
</comment>
<comment type="interaction">
    <interactant intactId="EBI-3650647">
        <id>Q9BUZ4</id>
    </interactant>
    <interactant intactId="EBI-2857430">
        <id>Q9C0D7</id>
        <label>ZC3H12C</label>
    </interactant>
    <organismsDiffer>false</organismsDiffer>
    <experiments>3</experiments>
</comment>
<comment type="interaction">
    <interactant intactId="EBI-3650647">
        <id>Q9BUZ4</id>
    </interactant>
    <interactant intactId="EBI-17634549">
        <id>Q9UJ78-2</id>
        <label>ZMYM5</label>
    </interactant>
    <organismsDiffer>false</organismsDiffer>
    <experiments>3</experiments>
</comment>
<comment type="interaction">
    <interactant intactId="EBI-3650647">
        <id>Q9BUZ4</id>
    </interactant>
    <interactant intactId="EBI-12272076">
        <id>Q13360-2</id>
        <label>ZNF177</label>
    </interactant>
    <organismsDiffer>false</organismsDiffer>
    <experiments>3</experiments>
</comment>
<comment type="interaction">
    <interactant intactId="EBI-3650647">
        <id>Q9BUZ4</id>
    </interactant>
    <interactant intactId="EBI-17263125">
        <id>Q9NSD4</id>
        <label>ZNF275</label>
    </interactant>
    <organismsDiffer>false</organismsDiffer>
    <experiments>3</experiments>
</comment>
<comment type="interaction">
    <interactant intactId="EBI-3650647">
        <id>Q9BUZ4</id>
    </interactant>
    <interactant intactId="EBI-1640965">
        <id>P17036</id>
        <label>ZNF3</label>
    </interactant>
    <organismsDiffer>false</organismsDiffer>
    <experiments>8</experiments>
</comment>
<comment type="interaction">
    <interactant intactId="EBI-3650647">
        <id>Q9BUZ4</id>
    </interactant>
    <interactant intactId="EBI-10258769">
        <id>Q86U76</id>
        <label>ZNF3</label>
    </interactant>
    <organismsDiffer>false</organismsDiffer>
    <experiments>3</experiments>
</comment>
<comment type="interaction">
    <interactant intactId="EBI-3650647">
        <id>Q9BUZ4</id>
    </interactant>
    <interactant intactId="EBI-745520">
        <id>Q9P0T4</id>
        <label>ZNF581</label>
    </interactant>
    <organismsDiffer>false</organismsDiffer>
    <experiments>6</experiments>
</comment>
<comment type="interaction">
    <interactant intactId="EBI-3650647">
        <id>Q9BUZ4</id>
    </interactant>
    <interactant intactId="EBI-4395669">
        <id>Q6ZNG0</id>
        <label>ZNF620</label>
    </interactant>
    <organismsDiffer>false</organismsDiffer>
    <experiments>3</experiments>
</comment>
<comment type="interaction">
    <interactant intactId="EBI-3650647">
        <id>Q9BUZ4</id>
    </interactant>
    <interactant intactId="EBI-16429014">
        <id>A0A0S2Z5X4</id>
        <label>ZNF688</label>
    </interactant>
    <organismsDiffer>false</organismsDiffer>
    <experiments>3</experiments>
</comment>
<comment type="interaction">
    <interactant intactId="EBI-3650647">
        <id>Q9BUZ4</id>
    </interactant>
    <interactant intactId="EBI-7138303">
        <id>Q8NCA9</id>
        <label>ZNF784</label>
    </interactant>
    <organismsDiffer>false</organismsDiffer>
    <experiments>3</experiments>
</comment>
<comment type="interaction">
    <interactant intactId="EBI-3650647">
        <id>Q9BUZ4</id>
    </interactant>
    <interactant intactId="EBI-5667516">
        <id>Q9Y2P0</id>
        <label>ZNF835</label>
    </interactant>
    <organismsDiffer>false</organismsDiffer>
    <experiments>3</experiments>
</comment>
<comment type="interaction">
    <interactant intactId="EBI-3650647">
        <id>Q9BUZ4</id>
    </interactant>
    <interactant intactId="EBI-527853">
        <id>Q9UGI0</id>
        <label>ZRANB1</label>
    </interactant>
    <organismsDiffer>false</organismsDiffer>
    <experiments>3</experiments>
</comment>
<comment type="interaction">
    <interactant intactId="EBI-3650647">
        <id>Q9BUZ4</id>
    </interactant>
    <interactant intactId="EBI-1038810">
        <id>P07174</id>
        <label>Ngfr</label>
    </interactant>
    <organismsDiffer>true</organismsDiffer>
    <experiments>3</experiments>
</comment>
<comment type="interaction">
    <interactant intactId="EBI-3650647">
        <id>Q9BUZ4</id>
    </interactant>
    <interactant intactId="EBI-11361108">
        <id>Q9E7P0</id>
    </interactant>
    <organismsDiffer>true</organismsDiffer>
    <experiments>2</experiments>
</comment>
<comment type="interaction">
    <interactant intactId="EBI-16084295">
        <id>Q9BUZ4-1</id>
    </interactant>
    <interactant intactId="EBI-16084295">
        <id>Q9BUZ4-1</id>
        <label>TRAF4</label>
    </interactant>
    <organismsDiffer>false</organismsDiffer>
    <experiments>4</experiments>
</comment>
<comment type="subcellular location">
    <subcellularLocation>
        <location evidence="19">Cytoplasm</location>
    </subcellularLocation>
    <subcellularLocation>
        <location evidence="19">Nucleus</location>
    </subcellularLocation>
    <subcellularLocation>
        <location>Cytoplasm</location>
        <location>Perinuclear region</location>
    </subcellularLocation>
    <subcellularLocation>
        <location>Cell junction</location>
        <location>Tight junction</location>
    </subcellularLocation>
    <subcellularLocation>
        <location>Cell membrane</location>
        <topology>Peripheral membrane protein</topology>
        <orientation>Cytoplasmic side</orientation>
    </subcellularLocation>
    <subcellularLocation>
        <location evidence="28">Cytoplasm</location>
        <location evidence="28">Cytoskeleton</location>
    </subcellularLocation>
</comment>
<comment type="alternative products">
    <event type="alternative splicing"/>
    <isoform>
        <id>Q9BUZ4-1</id>
        <name>1</name>
        <sequence type="displayed"/>
    </isoform>
    <isoform>
        <id>Q9BUZ4-2</id>
        <name>2</name>
        <name>TRAF4 variant 5</name>
        <sequence type="described" ref="VSP_007403"/>
    </isoform>
</comment>
<comment type="tissue specificity">
    <text evidence="23 24">Expressed in epithelial cells of thymus, dendritic cells of lymph node, and in the basal cell layer of epithelia such as epidermis, nasopharynx, respiratory tract, salivary gland, and esophagus.</text>
</comment>
<comment type="induction">
    <text evidence="10">Up-regulated by bacterial lipopolysaccharides (LPS) and by single-stranded CpG oligodeoxynucleotide.</text>
</comment>
<comment type="domain">
    <text evidence="1">The coiled coil domain mediates homo- and hetero-oligomerization.</text>
</comment>
<comment type="domain">
    <text evidence="1">The MATH/TRAF domain binds to receptor cytoplasmic domains.</text>
</comment>
<comment type="PTM">
    <text evidence="2 14">Polyubiquitinated, leading to its proteasomal degradation (PubMed:19937093). Ubiquitinated at Lys-263 by the SCF(FBXL2) complex, leading to its degradation by the proteasome (By similarity).</text>
</comment>
<comment type="similarity">
    <text evidence="28">Belongs to the TNF receptor-associated factor family. B subfamily.</text>
</comment>
<comment type="online information" name="Atlas of Genetics and Cytogenetics in Oncology and Haematology">
    <link uri="https://atlasgeneticsoncology.org/gene/204/TRAF4"/>
</comment>
<proteinExistence type="evidence at protein level"/>
<gene>
    <name type="primary">TRAF4</name>
    <name type="synonym">CART1</name>
    <name type="synonym">MLN62</name>
    <name type="synonym">RNF83</name>
</gene>
<organism>
    <name type="scientific">Homo sapiens</name>
    <name type="common">Human</name>
    <dbReference type="NCBI Taxonomy" id="9606"/>
    <lineage>
        <taxon>Eukaryota</taxon>
        <taxon>Metazoa</taxon>
        <taxon>Chordata</taxon>
        <taxon>Craniata</taxon>
        <taxon>Vertebrata</taxon>
        <taxon>Euteleostomi</taxon>
        <taxon>Mammalia</taxon>
        <taxon>Eutheria</taxon>
        <taxon>Euarchontoglires</taxon>
        <taxon>Primates</taxon>
        <taxon>Haplorrhini</taxon>
        <taxon>Catarrhini</taxon>
        <taxon>Hominidae</taxon>
        <taxon>Homo</taxon>
    </lineage>
</organism>
<name>TRAF4_HUMAN</name>